<organism>
    <name type="scientific">Salmonella schwarzengrund (strain CVM19633)</name>
    <dbReference type="NCBI Taxonomy" id="439843"/>
    <lineage>
        <taxon>Bacteria</taxon>
        <taxon>Pseudomonadati</taxon>
        <taxon>Pseudomonadota</taxon>
        <taxon>Gammaproteobacteria</taxon>
        <taxon>Enterobacterales</taxon>
        <taxon>Enterobacteriaceae</taxon>
        <taxon>Salmonella</taxon>
    </lineage>
</organism>
<gene>
    <name evidence="1" type="primary">fusA</name>
    <name type="ordered locus">SeSA_A3642</name>
</gene>
<proteinExistence type="inferred from homology"/>
<protein>
    <recommendedName>
        <fullName evidence="1">Elongation factor G</fullName>
        <shortName evidence="1">EF-G</shortName>
    </recommendedName>
</protein>
<name>EFG_SALSV</name>
<dbReference type="EMBL" id="CP001127">
    <property type="protein sequence ID" value="ACF88794.1"/>
    <property type="molecule type" value="Genomic_DNA"/>
</dbReference>
<dbReference type="RefSeq" id="WP_000124693.1">
    <property type="nucleotide sequence ID" value="NC_011094.1"/>
</dbReference>
<dbReference type="SMR" id="B4TXE8"/>
<dbReference type="KEGG" id="sew:SeSA_A3642"/>
<dbReference type="HOGENOM" id="CLU_002794_4_1_6"/>
<dbReference type="Proteomes" id="UP000001865">
    <property type="component" value="Chromosome"/>
</dbReference>
<dbReference type="GO" id="GO:0005737">
    <property type="term" value="C:cytoplasm"/>
    <property type="evidence" value="ECO:0007669"/>
    <property type="project" value="UniProtKB-SubCell"/>
</dbReference>
<dbReference type="GO" id="GO:0005525">
    <property type="term" value="F:GTP binding"/>
    <property type="evidence" value="ECO:0007669"/>
    <property type="project" value="UniProtKB-UniRule"/>
</dbReference>
<dbReference type="GO" id="GO:0003924">
    <property type="term" value="F:GTPase activity"/>
    <property type="evidence" value="ECO:0007669"/>
    <property type="project" value="InterPro"/>
</dbReference>
<dbReference type="GO" id="GO:0097216">
    <property type="term" value="F:guanosine tetraphosphate binding"/>
    <property type="evidence" value="ECO:0007669"/>
    <property type="project" value="UniProtKB-ARBA"/>
</dbReference>
<dbReference type="GO" id="GO:0003746">
    <property type="term" value="F:translation elongation factor activity"/>
    <property type="evidence" value="ECO:0007669"/>
    <property type="project" value="UniProtKB-UniRule"/>
</dbReference>
<dbReference type="GO" id="GO:0032790">
    <property type="term" value="P:ribosome disassembly"/>
    <property type="evidence" value="ECO:0007669"/>
    <property type="project" value="TreeGrafter"/>
</dbReference>
<dbReference type="CDD" id="cd01886">
    <property type="entry name" value="EF-G"/>
    <property type="match status" value="1"/>
</dbReference>
<dbReference type="CDD" id="cd16262">
    <property type="entry name" value="EFG_III"/>
    <property type="match status" value="1"/>
</dbReference>
<dbReference type="CDD" id="cd01434">
    <property type="entry name" value="EFG_mtEFG1_IV"/>
    <property type="match status" value="1"/>
</dbReference>
<dbReference type="CDD" id="cd03713">
    <property type="entry name" value="EFG_mtEFG_C"/>
    <property type="match status" value="1"/>
</dbReference>
<dbReference type="CDD" id="cd04088">
    <property type="entry name" value="EFG_mtEFG_II"/>
    <property type="match status" value="1"/>
</dbReference>
<dbReference type="FunFam" id="2.40.30.10:FF:000006">
    <property type="entry name" value="Elongation factor G"/>
    <property type="match status" value="1"/>
</dbReference>
<dbReference type="FunFam" id="3.30.230.10:FF:000003">
    <property type="entry name" value="Elongation factor G"/>
    <property type="match status" value="1"/>
</dbReference>
<dbReference type="FunFam" id="3.30.70.240:FF:000001">
    <property type="entry name" value="Elongation factor G"/>
    <property type="match status" value="1"/>
</dbReference>
<dbReference type="FunFam" id="3.30.70.870:FF:000001">
    <property type="entry name" value="Elongation factor G"/>
    <property type="match status" value="1"/>
</dbReference>
<dbReference type="FunFam" id="3.40.50.300:FF:000029">
    <property type="entry name" value="Elongation factor G"/>
    <property type="match status" value="1"/>
</dbReference>
<dbReference type="Gene3D" id="3.30.230.10">
    <property type="match status" value="1"/>
</dbReference>
<dbReference type="Gene3D" id="3.30.70.240">
    <property type="match status" value="1"/>
</dbReference>
<dbReference type="Gene3D" id="3.30.70.870">
    <property type="entry name" value="Elongation Factor G (Translational Gtpase), domain 3"/>
    <property type="match status" value="1"/>
</dbReference>
<dbReference type="Gene3D" id="3.40.50.300">
    <property type="entry name" value="P-loop containing nucleotide triphosphate hydrolases"/>
    <property type="match status" value="1"/>
</dbReference>
<dbReference type="Gene3D" id="2.40.30.10">
    <property type="entry name" value="Translation factors"/>
    <property type="match status" value="1"/>
</dbReference>
<dbReference type="HAMAP" id="MF_00054_B">
    <property type="entry name" value="EF_G_EF_2_B"/>
    <property type="match status" value="1"/>
</dbReference>
<dbReference type="InterPro" id="IPR041095">
    <property type="entry name" value="EFG_II"/>
</dbReference>
<dbReference type="InterPro" id="IPR009022">
    <property type="entry name" value="EFG_III"/>
</dbReference>
<dbReference type="InterPro" id="IPR035647">
    <property type="entry name" value="EFG_III/V"/>
</dbReference>
<dbReference type="InterPro" id="IPR047872">
    <property type="entry name" value="EFG_IV"/>
</dbReference>
<dbReference type="InterPro" id="IPR035649">
    <property type="entry name" value="EFG_V"/>
</dbReference>
<dbReference type="InterPro" id="IPR000640">
    <property type="entry name" value="EFG_V-like"/>
</dbReference>
<dbReference type="InterPro" id="IPR004161">
    <property type="entry name" value="EFTu-like_2"/>
</dbReference>
<dbReference type="InterPro" id="IPR031157">
    <property type="entry name" value="G_TR_CS"/>
</dbReference>
<dbReference type="InterPro" id="IPR027417">
    <property type="entry name" value="P-loop_NTPase"/>
</dbReference>
<dbReference type="InterPro" id="IPR020568">
    <property type="entry name" value="Ribosomal_Su5_D2-typ_SF"/>
</dbReference>
<dbReference type="InterPro" id="IPR014721">
    <property type="entry name" value="Ribsml_uS5_D2-typ_fold_subgr"/>
</dbReference>
<dbReference type="InterPro" id="IPR005225">
    <property type="entry name" value="Small_GTP-bd"/>
</dbReference>
<dbReference type="InterPro" id="IPR000795">
    <property type="entry name" value="T_Tr_GTP-bd_dom"/>
</dbReference>
<dbReference type="InterPro" id="IPR009000">
    <property type="entry name" value="Transl_B-barrel_sf"/>
</dbReference>
<dbReference type="InterPro" id="IPR004540">
    <property type="entry name" value="Transl_elong_EFG/EF2"/>
</dbReference>
<dbReference type="InterPro" id="IPR005517">
    <property type="entry name" value="Transl_elong_EFG/EF2_IV"/>
</dbReference>
<dbReference type="NCBIfam" id="TIGR00484">
    <property type="entry name" value="EF-G"/>
    <property type="match status" value="1"/>
</dbReference>
<dbReference type="NCBIfam" id="NF009381">
    <property type="entry name" value="PRK12740.1-5"/>
    <property type="match status" value="1"/>
</dbReference>
<dbReference type="NCBIfam" id="TIGR00231">
    <property type="entry name" value="small_GTP"/>
    <property type="match status" value="1"/>
</dbReference>
<dbReference type="PANTHER" id="PTHR43261:SF1">
    <property type="entry name" value="RIBOSOME-RELEASING FACTOR 2, MITOCHONDRIAL"/>
    <property type="match status" value="1"/>
</dbReference>
<dbReference type="PANTHER" id="PTHR43261">
    <property type="entry name" value="TRANSLATION ELONGATION FACTOR G-RELATED"/>
    <property type="match status" value="1"/>
</dbReference>
<dbReference type="Pfam" id="PF00679">
    <property type="entry name" value="EFG_C"/>
    <property type="match status" value="1"/>
</dbReference>
<dbReference type="Pfam" id="PF14492">
    <property type="entry name" value="EFG_III"/>
    <property type="match status" value="1"/>
</dbReference>
<dbReference type="Pfam" id="PF03764">
    <property type="entry name" value="EFG_IV"/>
    <property type="match status" value="1"/>
</dbReference>
<dbReference type="Pfam" id="PF00009">
    <property type="entry name" value="GTP_EFTU"/>
    <property type="match status" value="1"/>
</dbReference>
<dbReference type="Pfam" id="PF03144">
    <property type="entry name" value="GTP_EFTU_D2"/>
    <property type="match status" value="1"/>
</dbReference>
<dbReference type="PRINTS" id="PR00315">
    <property type="entry name" value="ELONGATNFCT"/>
</dbReference>
<dbReference type="SMART" id="SM00838">
    <property type="entry name" value="EFG_C"/>
    <property type="match status" value="1"/>
</dbReference>
<dbReference type="SMART" id="SM00889">
    <property type="entry name" value="EFG_IV"/>
    <property type="match status" value="1"/>
</dbReference>
<dbReference type="SUPFAM" id="SSF54980">
    <property type="entry name" value="EF-G C-terminal domain-like"/>
    <property type="match status" value="2"/>
</dbReference>
<dbReference type="SUPFAM" id="SSF52540">
    <property type="entry name" value="P-loop containing nucleoside triphosphate hydrolases"/>
    <property type="match status" value="1"/>
</dbReference>
<dbReference type="SUPFAM" id="SSF54211">
    <property type="entry name" value="Ribosomal protein S5 domain 2-like"/>
    <property type="match status" value="1"/>
</dbReference>
<dbReference type="SUPFAM" id="SSF50447">
    <property type="entry name" value="Translation proteins"/>
    <property type="match status" value="1"/>
</dbReference>
<dbReference type="PROSITE" id="PS00301">
    <property type="entry name" value="G_TR_1"/>
    <property type="match status" value="1"/>
</dbReference>
<dbReference type="PROSITE" id="PS51722">
    <property type="entry name" value="G_TR_2"/>
    <property type="match status" value="1"/>
</dbReference>
<reference key="1">
    <citation type="journal article" date="2011" name="J. Bacteriol.">
        <title>Comparative genomics of 28 Salmonella enterica isolates: evidence for CRISPR-mediated adaptive sublineage evolution.</title>
        <authorList>
            <person name="Fricke W.F."/>
            <person name="Mammel M.K."/>
            <person name="McDermott P.F."/>
            <person name="Tartera C."/>
            <person name="White D.G."/>
            <person name="Leclerc J.E."/>
            <person name="Ravel J."/>
            <person name="Cebula T.A."/>
        </authorList>
    </citation>
    <scope>NUCLEOTIDE SEQUENCE [LARGE SCALE GENOMIC DNA]</scope>
    <source>
        <strain>CVM19633</strain>
    </source>
</reference>
<accession>B4TXE8</accession>
<feature type="chain" id="PRO_1000091761" description="Elongation factor G">
    <location>
        <begin position="1"/>
        <end position="704"/>
    </location>
</feature>
<feature type="domain" description="tr-type G">
    <location>
        <begin position="8"/>
        <end position="290"/>
    </location>
</feature>
<feature type="binding site" evidence="1">
    <location>
        <begin position="17"/>
        <end position="24"/>
    </location>
    <ligand>
        <name>GTP</name>
        <dbReference type="ChEBI" id="CHEBI:37565"/>
    </ligand>
</feature>
<feature type="binding site" evidence="1">
    <location>
        <begin position="88"/>
        <end position="92"/>
    </location>
    <ligand>
        <name>GTP</name>
        <dbReference type="ChEBI" id="CHEBI:37565"/>
    </ligand>
</feature>
<feature type="binding site" evidence="1">
    <location>
        <begin position="142"/>
        <end position="145"/>
    </location>
    <ligand>
        <name>GTP</name>
        <dbReference type="ChEBI" id="CHEBI:37565"/>
    </ligand>
</feature>
<sequence>MARTTPIARYRNIGISAHIDAGKTTTTERILFYTGVNHKIGEVHDGAATMDWMEQEQERGITITSAATTAFWSGMAKQYEPHRINIIDTPGHVDFTIEVERSMRVLDGAVMVYCAVGGVQPQSETVWRQANKYKVPRIAFVNKMDRMGANFLKVVGQIKTRLGANPVPLQLAIGAEEGFTGVVDLVKMKAINWNDADQGVTFEYEDIPADMQDLANEWHQNLIESAAEASEELMEKYLGGEELTEEEIKQALRQRVLNNEIILVTCGSAFKNKGVQAMLDAVIDYLPSPVDVPAINGILDDGKDTPAERHASDDEPFSALAFKIATDPFVGNLTFFRVYSGVVNSGDTVLNSVKTARERFGRIVQMHANKREEIKEVRAGDIAAAIGLKDVTTGDTLCDPENPIILERMEFPEPVISIAVEPKTKADQEKMGLALGRLAKEDPSFRVWTDEESNQTIIAGMGELHLDIIVDRMKREFNVEANVGKPQVAYREAIRAKVTDIEGKHAKQSGGRGQYGHVVIDMYPLEPGSNPKGYEFINDIKGGVIPGEYIPAVDKGIQEQLKSGPLAGYPVVDLGVRLHFGSYHDVDSSELAFKLAASIAFKEGFKKAKPVLLEPIMKVEVETPEENTGDVIGDLSRRRGMLKGQESEVTGVKIHAEVPLSEMFGYATQLRSLTKGRASYTMEFLKYDDAPNNVAQAVIEARGK</sequence>
<evidence type="ECO:0000255" key="1">
    <source>
        <dbReference type="HAMAP-Rule" id="MF_00054"/>
    </source>
</evidence>
<comment type="function">
    <text evidence="1">Catalyzes the GTP-dependent ribosomal translocation step during translation elongation. During this step, the ribosome changes from the pre-translocational (PRE) to the post-translocational (POST) state as the newly formed A-site-bound peptidyl-tRNA and P-site-bound deacylated tRNA move to the P and E sites, respectively. Catalyzes the coordinated movement of the two tRNA molecules, the mRNA and conformational changes in the ribosome.</text>
</comment>
<comment type="subcellular location">
    <subcellularLocation>
        <location evidence="1">Cytoplasm</location>
    </subcellularLocation>
</comment>
<comment type="similarity">
    <text evidence="1">Belongs to the TRAFAC class translation factor GTPase superfamily. Classic translation factor GTPase family. EF-G/EF-2 subfamily.</text>
</comment>
<keyword id="KW-0963">Cytoplasm</keyword>
<keyword id="KW-0251">Elongation factor</keyword>
<keyword id="KW-0342">GTP-binding</keyword>
<keyword id="KW-0547">Nucleotide-binding</keyword>
<keyword id="KW-0648">Protein biosynthesis</keyword>